<feature type="signal peptide" evidence="1">
    <location>
        <begin position="1"/>
        <end position="27"/>
    </location>
</feature>
<feature type="chain" id="PRO_1000145633" description="UPF0323 lipoprotein HPSH_01205">
    <location>
        <begin position="28"/>
        <end position="217"/>
    </location>
</feature>
<feature type="region of interest" description="Disordered" evidence="2">
    <location>
        <begin position="160"/>
        <end position="217"/>
    </location>
</feature>
<feature type="compositionally biased region" description="Polar residues" evidence="2">
    <location>
        <begin position="160"/>
        <end position="171"/>
    </location>
</feature>
<feature type="compositionally biased region" description="Low complexity" evidence="2">
    <location>
        <begin position="172"/>
        <end position="210"/>
    </location>
</feature>
<feature type="lipid moiety-binding region" description="N-palmitoyl cysteine" evidence="1">
    <location>
        <position position="28"/>
    </location>
</feature>
<feature type="lipid moiety-binding region" description="S-diacylglycerol cysteine" evidence="1">
    <location>
        <position position="28"/>
    </location>
</feature>
<sequence length="217" mass="23031">MKKPYRKISDYAIVGGLSALVMVSIVGCKSNADDKPKEQSSLSQSVQKGAFVILEEQKDKSYKVVEEYPSSRTHIVVRDLQGNERVLSNEEIQKLIKEEEAKIDNGTSKLIQPNNGGGGSNESSGFGLGSAILGSAAGAILGSYIGNKLFNNPNYQQNAQRTYKSPQAYQRSQNSFSKSAPSASSMGGASKGQSGFFGSSRPTSSPAVSSGTRGFNS</sequence>
<keyword id="KW-1003">Cell membrane</keyword>
<keyword id="KW-0449">Lipoprotein</keyword>
<keyword id="KW-0472">Membrane</keyword>
<keyword id="KW-0564">Palmitate</keyword>
<keyword id="KW-0732">Signal</keyword>
<gene>
    <name type="ordered locus">HPSH_01205</name>
</gene>
<name>Y1205_HELPS</name>
<organism>
    <name type="scientific">Helicobacter pylori (strain Shi470)</name>
    <dbReference type="NCBI Taxonomy" id="512562"/>
    <lineage>
        <taxon>Bacteria</taxon>
        <taxon>Pseudomonadati</taxon>
        <taxon>Campylobacterota</taxon>
        <taxon>Epsilonproteobacteria</taxon>
        <taxon>Campylobacterales</taxon>
        <taxon>Helicobacteraceae</taxon>
        <taxon>Helicobacter</taxon>
    </lineage>
</organism>
<evidence type="ECO:0000255" key="1">
    <source>
        <dbReference type="HAMAP-Rule" id="MF_01421"/>
    </source>
</evidence>
<evidence type="ECO:0000256" key="2">
    <source>
        <dbReference type="SAM" id="MobiDB-lite"/>
    </source>
</evidence>
<dbReference type="EMBL" id="CP001072">
    <property type="protein sequence ID" value="ACD47695.1"/>
    <property type="molecule type" value="Genomic_DNA"/>
</dbReference>
<dbReference type="RefSeq" id="WP_000743526.1">
    <property type="nucleotide sequence ID" value="NC_010698.2"/>
</dbReference>
<dbReference type="KEGG" id="hps:HPSH_01205"/>
<dbReference type="HOGENOM" id="CLU_111520_0_0_7"/>
<dbReference type="GO" id="GO:0005886">
    <property type="term" value="C:plasma membrane"/>
    <property type="evidence" value="ECO:0007669"/>
    <property type="project" value="UniProtKB-SubCell"/>
</dbReference>
<dbReference type="HAMAP" id="MF_01421">
    <property type="entry name" value="UPF0323"/>
    <property type="match status" value="1"/>
</dbReference>
<dbReference type="InterPro" id="IPR020913">
    <property type="entry name" value="UPF0323"/>
</dbReference>
<dbReference type="NCBIfam" id="NF003146">
    <property type="entry name" value="PRK04081.1"/>
    <property type="match status" value="1"/>
</dbReference>
<dbReference type="PROSITE" id="PS51257">
    <property type="entry name" value="PROKAR_LIPOPROTEIN"/>
    <property type="match status" value="1"/>
</dbReference>
<protein>
    <recommendedName>
        <fullName evidence="1">UPF0323 lipoprotein HPSH_01205</fullName>
    </recommendedName>
</protein>
<accession>B2US63</accession>
<comment type="subcellular location">
    <subcellularLocation>
        <location evidence="1">Cell membrane</location>
        <topology evidence="1">Lipid-anchor</topology>
    </subcellularLocation>
</comment>
<comment type="similarity">
    <text evidence="1">Belongs to the UPF0323 family.</text>
</comment>
<reference key="1">
    <citation type="submission" date="2008-05" db="EMBL/GenBank/DDBJ databases">
        <title>Genome sequence of Helicobacter pylori from the remote Amazon: traces of Asian ancestry of the first Americans.</title>
        <authorList>
            <person name="Kersulyte D."/>
            <person name="Kalia A."/>
            <person name="Gilman R.H."/>
            <person name="Berg D.E."/>
        </authorList>
    </citation>
    <scope>NUCLEOTIDE SEQUENCE [LARGE SCALE GENOMIC DNA]</scope>
    <source>
        <strain>Shi470</strain>
    </source>
</reference>
<proteinExistence type="inferred from homology"/>